<proteinExistence type="evidence at protein level"/>
<accession>Q94AF0</accession>
<accession>Q9SZQ4</accession>
<sequence length="222" mass="25561">MGEEARALDMEEISDNTTRRNDVVHDLMVDLYPLSSYYFGSKEALRVKDEIISDRVIRLKSNYAAHGLRTCVEAVLLVELFKHPHVLLLQYRNSIFKLPGGRLRPGESDIEGLKRKLASKLSVNENVGVSGYEVGECIGMWWRPNFETLMYPFLPPNIKHPKECTKLFLVRLPVHQQFVVPKNFKLLAVPLCQLHENEKTYGPIMSQIPKLLSKFSFNMMEI</sequence>
<protein>
    <recommendedName>
        <fullName evidence="6">Pre-mRNA cleavage factor Im 25 kDa subunit 1</fullName>
    </recommendedName>
    <alternativeName>
        <fullName evidence="5">Cleavage and polyadenylation specificity factor 25 kDa subunit</fullName>
        <shortName evidence="5">AtCFI-25</shortName>
        <shortName evidence="5">CFIm-25</shortName>
        <shortName evidence="7">CPSF 25 kDa subunit</shortName>
    </alternativeName>
    <alternativeName>
        <fullName evidence="5">Cleavage and polyadenylation specificity factor subunit 25</fullName>
    </alternativeName>
</protein>
<comment type="function">
    <text evidence="1">Component of the cleavage factor Im (CFIm) complex that plays a key role in pre-mRNA 3'-processing. Involved in association with CPSF6 or CPSF7 in pre-MRNA 3'-end poly(A) site cleavage and poly(A) addition. NUDT21/CPSF5 binds to cleavage and polyadenylation RNA substrates. The homodimer mediates simultaneous sequence-specific recognition of two 5'-UGUA-3' elements within the pre-mRNA. Binds to, but does not hydrolyze mono- and di-adenosine nucleotides. May have a role in mRNA export.</text>
</comment>
<comment type="subunit">
    <text evidence="1 3 4">Homodimer. Component of the cleavage factor Im (CFIm) complex (By similarity). Forms a complex with cleavage and polyadenylation specificity factor (CPSF) subunits FIPS5 (PubMed:16282318, PubMed:18479511).</text>
</comment>
<comment type="interaction">
    <interactant intactId="EBI-962531">
        <id>Q94AF0</id>
    </interactant>
    <interactant intactId="EBI-962489">
        <id>F4KDH9</id>
        <label>FIPS5</label>
    </interactant>
    <organismsDiffer>false</organismsDiffer>
    <experiments>3</experiments>
</comment>
<comment type="subcellular location">
    <subcellularLocation>
        <location evidence="1">Nucleus</location>
    </subcellularLocation>
    <text evidence="1">In punctate subnuclear structures localized adjacent to nuclear speckles, called paraspeckles.</text>
</comment>
<comment type="similarity">
    <text evidence="7">Belongs to the Nudix hydrolase family. CPSF5 subfamily.</text>
</comment>
<comment type="sequence caution" evidence="7">
    <conflict type="erroneous gene model prediction">
        <sequence resource="EMBL-CDS" id="CAB43657"/>
    </conflict>
</comment>
<comment type="sequence caution" evidence="7">
    <conflict type="erroneous gene model prediction">
        <sequence resource="EMBL-CDS" id="CAB79740"/>
    </conflict>
</comment>
<keyword id="KW-0479">Metal-binding</keyword>
<keyword id="KW-0507">mRNA processing</keyword>
<keyword id="KW-0539">Nucleus</keyword>
<keyword id="KW-1185">Reference proteome</keyword>
<keyword id="KW-0694">RNA-binding</keyword>
<reference key="1">
    <citation type="journal article" date="1999" name="Nature">
        <title>Sequence and analysis of chromosome 4 of the plant Arabidopsis thaliana.</title>
        <authorList>
            <person name="Mayer K.F.X."/>
            <person name="Schueller C."/>
            <person name="Wambutt R."/>
            <person name="Murphy G."/>
            <person name="Volckaert G."/>
            <person name="Pohl T."/>
            <person name="Duesterhoeft A."/>
            <person name="Stiekema W."/>
            <person name="Entian K.-D."/>
            <person name="Terryn N."/>
            <person name="Harris B."/>
            <person name="Ansorge W."/>
            <person name="Brandt P."/>
            <person name="Grivell L.A."/>
            <person name="Rieger M."/>
            <person name="Weichselgartner M."/>
            <person name="de Simone V."/>
            <person name="Obermaier B."/>
            <person name="Mache R."/>
            <person name="Mueller M."/>
            <person name="Kreis M."/>
            <person name="Delseny M."/>
            <person name="Puigdomenech P."/>
            <person name="Watson M."/>
            <person name="Schmidtheini T."/>
            <person name="Reichert B."/>
            <person name="Portetelle D."/>
            <person name="Perez-Alonso M."/>
            <person name="Boutry M."/>
            <person name="Bancroft I."/>
            <person name="Vos P."/>
            <person name="Hoheisel J."/>
            <person name="Zimmermann W."/>
            <person name="Wedler H."/>
            <person name="Ridley P."/>
            <person name="Langham S.-A."/>
            <person name="McCullagh B."/>
            <person name="Bilham L."/>
            <person name="Robben J."/>
            <person name="van der Schueren J."/>
            <person name="Grymonprez B."/>
            <person name="Chuang Y.-J."/>
            <person name="Vandenbussche F."/>
            <person name="Braeken M."/>
            <person name="Weltjens I."/>
            <person name="Voet M."/>
            <person name="Bastiaens I."/>
            <person name="Aert R."/>
            <person name="Defoor E."/>
            <person name="Weitzenegger T."/>
            <person name="Bothe G."/>
            <person name="Ramsperger U."/>
            <person name="Hilbert H."/>
            <person name="Braun M."/>
            <person name="Holzer E."/>
            <person name="Brandt A."/>
            <person name="Peters S."/>
            <person name="van Staveren M."/>
            <person name="Dirkse W."/>
            <person name="Mooijman P."/>
            <person name="Klein Lankhorst R."/>
            <person name="Rose M."/>
            <person name="Hauf J."/>
            <person name="Koetter P."/>
            <person name="Berneiser S."/>
            <person name="Hempel S."/>
            <person name="Feldpausch M."/>
            <person name="Lamberth S."/>
            <person name="Van den Daele H."/>
            <person name="De Keyser A."/>
            <person name="Buysshaert C."/>
            <person name="Gielen J."/>
            <person name="Villarroel R."/>
            <person name="De Clercq R."/>
            <person name="van Montagu M."/>
            <person name="Rogers J."/>
            <person name="Cronin A."/>
            <person name="Quail M.A."/>
            <person name="Bray-Allen S."/>
            <person name="Clark L."/>
            <person name="Doggett J."/>
            <person name="Hall S."/>
            <person name="Kay M."/>
            <person name="Lennard N."/>
            <person name="McLay K."/>
            <person name="Mayes R."/>
            <person name="Pettett A."/>
            <person name="Rajandream M.A."/>
            <person name="Lyne M."/>
            <person name="Benes V."/>
            <person name="Rechmann S."/>
            <person name="Borkova D."/>
            <person name="Bloecker H."/>
            <person name="Scharfe M."/>
            <person name="Grimm M."/>
            <person name="Loehnert T.-H."/>
            <person name="Dose S."/>
            <person name="de Haan M."/>
            <person name="Maarse A.C."/>
            <person name="Schaefer M."/>
            <person name="Mueller-Auer S."/>
            <person name="Gabel C."/>
            <person name="Fuchs M."/>
            <person name="Fartmann B."/>
            <person name="Granderath K."/>
            <person name="Dauner D."/>
            <person name="Herzl A."/>
            <person name="Neumann S."/>
            <person name="Argiriou A."/>
            <person name="Vitale D."/>
            <person name="Liguori R."/>
            <person name="Piravandi E."/>
            <person name="Massenet O."/>
            <person name="Quigley F."/>
            <person name="Clabauld G."/>
            <person name="Muendlein A."/>
            <person name="Felber R."/>
            <person name="Schnabl S."/>
            <person name="Hiller R."/>
            <person name="Schmidt W."/>
            <person name="Lecharny A."/>
            <person name="Aubourg S."/>
            <person name="Chefdor F."/>
            <person name="Cooke R."/>
            <person name="Berger C."/>
            <person name="Monfort A."/>
            <person name="Casacuberta E."/>
            <person name="Gibbons T."/>
            <person name="Weber N."/>
            <person name="Vandenbol M."/>
            <person name="Bargues M."/>
            <person name="Terol J."/>
            <person name="Torres A."/>
            <person name="Perez-Perez A."/>
            <person name="Purnelle B."/>
            <person name="Bent E."/>
            <person name="Johnson S."/>
            <person name="Tacon D."/>
            <person name="Jesse T."/>
            <person name="Heijnen L."/>
            <person name="Schwarz S."/>
            <person name="Scholler P."/>
            <person name="Heber S."/>
            <person name="Francs P."/>
            <person name="Bielke C."/>
            <person name="Frishman D."/>
            <person name="Haase D."/>
            <person name="Lemcke K."/>
            <person name="Mewes H.-W."/>
            <person name="Stocker S."/>
            <person name="Zaccaria P."/>
            <person name="Bevan M."/>
            <person name="Wilson R.K."/>
            <person name="de la Bastide M."/>
            <person name="Habermann K."/>
            <person name="Parnell L."/>
            <person name="Dedhia N."/>
            <person name="Gnoj L."/>
            <person name="Schutz K."/>
            <person name="Huang E."/>
            <person name="Spiegel L."/>
            <person name="Sekhon M."/>
            <person name="Murray J."/>
            <person name="Sheet P."/>
            <person name="Cordes M."/>
            <person name="Abu-Threideh J."/>
            <person name="Stoneking T."/>
            <person name="Kalicki J."/>
            <person name="Graves T."/>
            <person name="Harmon G."/>
            <person name="Edwards J."/>
            <person name="Latreille P."/>
            <person name="Courtney L."/>
            <person name="Cloud J."/>
            <person name="Abbott A."/>
            <person name="Scott K."/>
            <person name="Johnson D."/>
            <person name="Minx P."/>
            <person name="Bentley D."/>
            <person name="Fulton B."/>
            <person name="Miller N."/>
            <person name="Greco T."/>
            <person name="Kemp K."/>
            <person name="Kramer J."/>
            <person name="Fulton L."/>
            <person name="Mardis E."/>
            <person name="Dante M."/>
            <person name="Pepin K."/>
            <person name="Hillier L.W."/>
            <person name="Nelson J."/>
            <person name="Spieth J."/>
            <person name="Ryan E."/>
            <person name="Andrews S."/>
            <person name="Geisel C."/>
            <person name="Layman D."/>
            <person name="Du H."/>
            <person name="Ali J."/>
            <person name="Berghoff A."/>
            <person name="Jones K."/>
            <person name="Drone K."/>
            <person name="Cotton M."/>
            <person name="Joshu C."/>
            <person name="Antonoiu B."/>
            <person name="Zidanic M."/>
            <person name="Strong C."/>
            <person name="Sun H."/>
            <person name="Lamar B."/>
            <person name="Yordan C."/>
            <person name="Ma P."/>
            <person name="Zhong J."/>
            <person name="Preston R."/>
            <person name="Vil D."/>
            <person name="Shekher M."/>
            <person name="Matero A."/>
            <person name="Shah R."/>
            <person name="Swaby I.K."/>
            <person name="O'Shaughnessy A."/>
            <person name="Rodriguez M."/>
            <person name="Hoffman J."/>
            <person name="Till S."/>
            <person name="Granat S."/>
            <person name="Shohdy N."/>
            <person name="Hasegawa A."/>
            <person name="Hameed A."/>
            <person name="Lodhi M."/>
            <person name="Johnson A."/>
            <person name="Chen E."/>
            <person name="Marra M.A."/>
            <person name="Martienssen R."/>
            <person name="McCombie W.R."/>
        </authorList>
    </citation>
    <scope>NUCLEOTIDE SEQUENCE [LARGE SCALE GENOMIC DNA]</scope>
    <source>
        <strain>cv. Columbia</strain>
    </source>
</reference>
<reference key="2">
    <citation type="journal article" date="2017" name="Plant J.">
        <title>Araport11: a complete reannotation of the Arabidopsis thaliana reference genome.</title>
        <authorList>
            <person name="Cheng C.Y."/>
            <person name="Krishnakumar V."/>
            <person name="Chan A.P."/>
            <person name="Thibaud-Nissen F."/>
            <person name="Schobel S."/>
            <person name="Town C.D."/>
        </authorList>
    </citation>
    <scope>GENOME REANNOTATION</scope>
    <source>
        <strain>cv. Columbia</strain>
    </source>
</reference>
<reference key="3">
    <citation type="journal article" date="2003" name="Science">
        <title>Empirical analysis of transcriptional activity in the Arabidopsis genome.</title>
        <authorList>
            <person name="Yamada K."/>
            <person name="Lim J."/>
            <person name="Dale J.M."/>
            <person name="Chen H."/>
            <person name="Shinn P."/>
            <person name="Palm C.J."/>
            <person name="Southwick A.M."/>
            <person name="Wu H.C."/>
            <person name="Kim C.J."/>
            <person name="Nguyen M."/>
            <person name="Pham P.K."/>
            <person name="Cheuk R.F."/>
            <person name="Karlin-Newmann G."/>
            <person name="Liu S.X."/>
            <person name="Lam B."/>
            <person name="Sakano H."/>
            <person name="Wu T."/>
            <person name="Yu G."/>
            <person name="Miranda M."/>
            <person name="Quach H.L."/>
            <person name="Tripp M."/>
            <person name="Chang C.H."/>
            <person name="Lee J.M."/>
            <person name="Toriumi M.J."/>
            <person name="Chan M.M."/>
            <person name="Tang C.C."/>
            <person name="Onodera C.S."/>
            <person name="Deng J.M."/>
            <person name="Akiyama K."/>
            <person name="Ansari Y."/>
            <person name="Arakawa T."/>
            <person name="Banh J."/>
            <person name="Banno F."/>
            <person name="Bowser L."/>
            <person name="Brooks S.Y."/>
            <person name="Carninci P."/>
            <person name="Chao Q."/>
            <person name="Choy N."/>
            <person name="Enju A."/>
            <person name="Goldsmith A.D."/>
            <person name="Gurjal M."/>
            <person name="Hansen N.F."/>
            <person name="Hayashizaki Y."/>
            <person name="Johnson-Hopson C."/>
            <person name="Hsuan V.W."/>
            <person name="Iida K."/>
            <person name="Karnes M."/>
            <person name="Khan S."/>
            <person name="Koesema E."/>
            <person name="Ishida J."/>
            <person name="Jiang P.X."/>
            <person name="Jones T."/>
            <person name="Kawai J."/>
            <person name="Kamiya A."/>
            <person name="Meyers C."/>
            <person name="Nakajima M."/>
            <person name="Narusaka M."/>
            <person name="Seki M."/>
            <person name="Sakurai T."/>
            <person name="Satou M."/>
            <person name="Tamse R."/>
            <person name="Vaysberg M."/>
            <person name="Wallender E.K."/>
            <person name="Wong C."/>
            <person name="Yamamura Y."/>
            <person name="Yuan S."/>
            <person name="Shinozaki K."/>
            <person name="Davis R.W."/>
            <person name="Theologis A."/>
            <person name="Ecker J.R."/>
        </authorList>
    </citation>
    <scope>NUCLEOTIDE SEQUENCE [LARGE SCALE MRNA]</scope>
    <source>
        <strain>cv. Columbia</strain>
    </source>
</reference>
<reference key="4">
    <citation type="submission" date="2002-03" db="EMBL/GenBank/DDBJ databases">
        <title>Full-length cDNA from Arabidopsis thaliana.</title>
        <authorList>
            <person name="Brover V.V."/>
            <person name="Troukhan M.E."/>
            <person name="Alexandrov N.A."/>
            <person name="Lu Y.-P."/>
            <person name="Flavell R.B."/>
            <person name="Feldmann K.A."/>
        </authorList>
    </citation>
    <scope>NUCLEOTIDE SEQUENCE [LARGE SCALE MRNA]</scope>
</reference>
<reference key="5">
    <citation type="journal article" date="2006" name="J. Biol. Chem.">
        <title>An Arabidopsis Fip1 homolog interacts with RNA and provides conceptual links with a number of other polyadenylation factor subunits.</title>
        <authorList>
            <person name="Forbes K.P."/>
            <person name="Addepalli B."/>
            <person name="Hunt A.G."/>
        </authorList>
    </citation>
    <scope>GENE FAMILY</scope>
    <scope>INTERACTION WITH FIPS5</scope>
</reference>
<reference key="6">
    <citation type="journal article" date="2008" name="BMC Genomics">
        <title>Arabidopsis mRNA polyadenylation machinery: comprehensive analysis of protein-protein interactions and gene expression profiling.</title>
        <authorList>
            <person name="Hunt A.G."/>
            <person name="Xu R."/>
            <person name="Addepalli B."/>
            <person name="Rao S."/>
            <person name="Forbes K.P."/>
            <person name="Meeks L.R."/>
            <person name="Xing D."/>
            <person name="Mo M."/>
            <person name="Zhao H."/>
            <person name="Bandyopadhyay A."/>
            <person name="Dampanaboina L."/>
            <person name="Marion A."/>
            <person name="Von Lanken C."/>
            <person name="Li Q.Q."/>
        </authorList>
    </citation>
    <scope>INTERACTION WITH FIPS5</scope>
    <scope>GENE FAMILY</scope>
    <scope>NOMENCLATURE</scope>
</reference>
<dbReference type="EMBL" id="AL050352">
    <property type="protein sequence ID" value="CAB43657.1"/>
    <property type="status" value="ALT_SEQ"/>
    <property type="molecule type" value="Genomic_DNA"/>
</dbReference>
<dbReference type="EMBL" id="AL161575">
    <property type="protein sequence ID" value="CAB79740.1"/>
    <property type="status" value="ALT_SEQ"/>
    <property type="molecule type" value="Genomic_DNA"/>
</dbReference>
<dbReference type="EMBL" id="CP002687">
    <property type="protein sequence ID" value="AEE85682.1"/>
    <property type="molecule type" value="Genomic_DNA"/>
</dbReference>
<dbReference type="EMBL" id="AY048229">
    <property type="protein sequence ID" value="AAK82492.1"/>
    <property type="molecule type" value="mRNA"/>
</dbReference>
<dbReference type="EMBL" id="AY091704">
    <property type="protein sequence ID" value="AAM10303.1"/>
    <property type="molecule type" value="mRNA"/>
</dbReference>
<dbReference type="EMBL" id="AY085984">
    <property type="protein sequence ID" value="AAM63194.1"/>
    <property type="molecule type" value="mRNA"/>
</dbReference>
<dbReference type="PIR" id="T08543">
    <property type="entry name" value="T08543"/>
</dbReference>
<dbReference type="SMR" id="Q94AF0"/>
<dbReference type="BioGRID" id="14391">
    <property type="interactions" value="10"/>
</dbReference>
<dbReference type="FunCoup" id="Q94AF0">
    <property type="interactions" value="829"/>
</dbReference>
<dbReference type="IntAct" id="Q94AF0">
    <property type="interactions" value="9"/>
</dbReference>
<dbReference type="STRING" id="3702.Q94AF0"/>
<dbReference type="PaxDb" id="3702-AT4G29820.1"/>
<dbReference type="ProteomicsDB" id="241231"/>
<dbReference type="EnsemblPlants" id="AT4G29820.1">
    <property type="protein sequence ID" value="AT4G29820.1"/>
    <property type="gene ID" value="AT4G29820"/>
</dbReference>
<dbReference type="GeneID" id="829104"/>
<dbReference type="Gramene" id="AT4G29820.1">
    <property type="protein sequence ID" value="AT4G29820.1"/>
    <property type="gene ID" value="AT4G29820"/>
</dbReference>
<dbReference type="KEGG" id="ath:AT4G29820"/>
<dbReference type="Araport" id="AT4G29820"/>
<dbReference type="TAIR" id="AT4G29820">
    <property type="gene designation" value="CFIM-25"/>
</dbReference>
<dbReference type="eggNOG" id="KOG1689">
    <property type="taxonomic scope" value="Eukaryota"/>
</dbReference>
<dbReference type="HOGENOM" id="CLU_068704_1_1_1"/>
<dbReference type="InParanoid" id="Q94AF0"/>
<dbReference type="OMA" id="IPLCQIN"/>
<dbReference type="PhylomeDB" id="Q94AF0"/>
<dbReference type="PRO" id="PR:Q94AF0"/>
<dbReference type="Proteomes" id="UP000006548">
    <property type="component" value="Chromosome 4"/>
</dbReference>
<dbReference type="ExpressionAtlas" id="Q94AF0">
    <property type="expression patterns" value="baseline and differential"/>
</dbReference>
<dbReference type="GO" id="GO:0005849">
    <property type="term" value="C:mRNA cleavage factor complex"/>
    <property type="evidence" value="ECO:0007669"/>
    <property type="project" value="InterPro"/>
</dbReference>
<dbReference type="GO" id="GO:0046872">
    <property type="term" value="F:metal ion binding"/>
    <property type="evidence" value="ECO:0007669"/>
    <property type="project" value="UniProtKB-KW"/>
</dbReference>
<dbReference type="GO" id="GO:0003729">
    <property type="term" value="F:mRNA binding"/>
    <property type="evidence" value="ECO:0007669"/>
    <property type="project" value="InterPro"/>
</dbReference>
<dbReference type="GO" id="GO:0031124">
    <property type="term" value="P:mRNA 3'-end processing"/>
    <property type="evidence" value="ECO:0007669"/>
    <property type="project" value="InterPro"/>
</dbReference>
<dbReference type="CDD" id="cd18871">
    <property type="entry name" value="NUDIX_Cfim25_Nudt21"/>
    <property type="match status" value="1"/>
</dbReference>
<dbReference type="FunFam" id="3.90.79.10:FF:000020">
    <property type="entry name" value="Pre-mRNA cleavage factor Im subunit 2"/>
    <property type="match status" value="1"/>
</dbReference>
<dbReference type="Gene3D" id="3.90.79.10">
    <property type="entry name" value="Nucleoside Triphosphate Pyrophosphohydrolase"/>
    <property type="match status" value="1"/>
</dbReference>
<dbReference type="InterPro" id="IPR016706">
    <property type="entry name" value="Cleav_polyA_spec_factor_su5"/>
</dbReference>
<dbReference type="InterPro" id="IPR015797">
    <property type="entry name" value="NUDIX_hydrolase-like_dom_sf"/>
</dbReference>
<dbReference type="PANTHER" id="PTHR13047">
    <property type="entry name" value="PRE-MRNA CLEAVAGE FACTOR IM, 25KD SUBUNIT"/>
    <property type="match status" value="1"/>
</dbReference>
<dbReference type="Pfam" id="PF13869">
    <property type="entry name" value="NUDIX_2"/>
    <property type="match status" value="1"/>
</dbReference>
<dbReference type="PIRSF" id="PIRSF017888">
    <property type="entry name" value="CPSF-25"/>
    <property type="match status" value="1"/>
</dbReference>
<dbReference type="SUPFAM" id="SSF55811">
    <property type="entry name" value="Nudix"/>
    <property type="match status" value="1"/>
</dbReference>
<gene>
    <name evidence="6" type="primary">CFIS1</name>
    <name evidence="5" type="synonym">CFIM25</name>
    <name evidence="8" type="ordered locus">At4g29820</name>
    <name evidence="10" type="ORF">F27B13.60</name>
</gene>
<feature type="chain" id="PRO_0000431331" description="Pre-mRNA cleavage factor Im 25 kDa subunit 1">
    <location>
        <begin position="1"/>
        <end position="222"/>
    </location>
</feature>
<feature type="domain" description="Nudix hydrolase" evidence="2">
    <location>
        <begin position="67"/>
        <end position="194"/>
    </location>
</feature>
<feature type="region of interest" description="Interaction with RNA" evidence="1">
    <location>
        <begin position="94"/>
        <end position="96"/>
    </location>
</feature>
<feature type="short sequence motif" description="Nudix box" evidence="2">
    <location>
        <begin position="101"/>
        <end position="122"/>
    </location>
</feature>
<feature type="site" description="Interaction with RNA" evidence="1">
    <location>
        <position position="55"/>
    </location>
</feature>
<feature type="site" description="Interaction with RNA" evidence="1">
    <location>
        <position position="201"/>
    </location>
</feature>
<organism evidence="9">
    <name type="scientific">Arabidopsis thaliana</name>
    <name type="common">Mouse-ear cress</name>
    <dbReference type="NCBI Taxonomy" id="3702"/>
    <lineage>
        <taxon>Eukaryota</taxon>
        <taxon>Viridiplantae</taxon>
        <taxon>Streptophyta</taxon>
        <taxon>Embryophyta</taxon>
        <taxon>Tracheophyta</taxon>
        <taxon>Spermatophyta</taxon>
        <taxon>Magnoliopsida</taxon>
        <taxon>eudicotyledons</taxon>
        <taxon>Gunneridae</taxon>
        <taxon>Pentapetalae</taxon>
        <taxon>rosids</taxon>
        <taxon>malvids</taxon>
        <taxon>Brassicales</taxon>
        <taxon>Brassicaceae</taxon>
        <taxon>Camelineae</taxon>
        <taxon>Arabidopsis</taxon>
    </lineage>
</organism>
<name>CFIS1_ARATH</name>
<evidence type="ECO:0000250" key="1">
    <source>
        <dbReference type="UniProtKB" id="O43809"/>
    </source>
</evidence>
<evidence type="ECO:0000255" key="2">
    <source>
        <dbReference type="PROSITE-ProRule" id="PRU00794"/>
    </source>
</evidence>
<evidence type="ECO:0000269" key="3">
    <source>
    </source>
</evidence>
<evidence type="ECO:0000269" key="4">
    <source>
    </source>
</evidence>
<evidence type="ECO:0000303" key="5">
    <source>
    </source>
</evidence>
<evidence type="ECO:0000303" key="6">
    <source>
    </source>
</evidence>
<evidence type="ECO:0000305" key="7"/>
<evidence type="ECO:0000312" key="8">
    <source>
        <dbReference type="Araport" id="AT4G29820"/>
    </source>
</evidence>
<evidence type="ECO:0000312" key="9">
    <source>
        <dbReference type="EMBL" id="AAK82492.1"/>
    </source>
</evidence>
<evidence type="ECO:0000312" key="10">
    <source>
        <dbReference type="EMBL" id="CAB43657.1"/>
    </source>
</evidence>